<keyword id="KW-0489">Methyltransferase</keyword>
<keyword id="KW-1185">Reference proteome</keyword>
<keyword id="KW-0808">Transferase</keyword>
<proteinExistence type="inferred from homology"/>
<evidence type="ECO:0000305" key="1"/>
<sequence length="243" mass="26641">MTCSRRDMSLSFGSAVGAYERGRPSYPPEAIDWLLPAAARRVLDLGAGTGKLTTRLVERGLDVVAVDPIPEMLDVLRAALPQTVALLGTAEEIPLDDNSVDAVLVAQAWHWVDPARAIPEVARVLRPGGRLGLVWNTRDERLGWVRELGEIIGRDGDPVRDRVTLPEPFTTVQRHQVEWTNYLTPQALIDLVASRSYCITSPAQVRTKTLDRVRQLLATHPALANSNGLALPYVTVCVRATLA</sequence>
<reference key="1">
    <citation type="journal article" date="2002" name="J. Bacteriol.">
        <title>Whole-genome comparison of Mycobacterium tuberculosis clinical and laboratory strains.</title>
        <authorList>
            <person name="Fleischmann R.D."/>
            <person name="Alland D."/>
            <person name="Eisen J.A."/>
            <person name="Carpenter L."/>
            <person name="White O."/>
            <person name="Peterson J.D."/>
            <person name="DeBoy R.T."/>
            <person name="Dodson R.J."/>
            <person name="Gwinn M.L."/>
            <person name="Haft D.H."/>
            <person name="Hickey E.K."/>
            <person name="Kolonay J.F."/>
            <person name="Nelson W.C."/>
            <person name="Umayam L.A."/>
            <person name="Ermolaeva M.D."/>
            <person name="Salzberg S.L."/>
            <person name="Delcher A."/>
            <person name="Utterback T.R."/>
            <person name="Weidman J.F."/>
            <person name="Khouri H.M."/>
            <person name="Gill J."/>
            <person name="Mikula A."/>
            <person name="Bishai W."/>
            <person name="Jacobs W.R. Jr."/>
            <person name="Venter J.C."/>
            <person name="Fraser C.M."/>
        </authorList>
    </citation>
    <scope>NUCLEOTIDE SEQUENCE [LARGE SCALE GENOMIC DNA]</scope>
    <source>
        <strain>CDC 1551 / Oshkosh</strain>
    </source>
</reference>
<name>Y3342_MYCTO</name>
<protein>
    <recommendedName>
        <fullName>Uncharacterized methyltransferase MT3445</fullName>
        <ecNumber>2.1.1.-</ecNumber>
    </recommendedName>
</protein>
<organism>
    <name type="scientific">Mycobacterium tuberculosis (strain CDC 1551 / Oshkosh)</name>
    <dbReference type="NCBI Taxonomy" id="83331"/>
    <lineage>
        <taxon>Bacteria</taxon>
        <taxon>Bacillati</taxon>
        <taxon>Actinomycetota</taxon>
        <taxon>Actinomycetes</taxon>
        <taxon>Mycobacteriales</taxon>
        <taxon>Mycobacteriaceae</taxon>
        <taxon>Mycobacterium</taxon>
        <taxon>Mycobacterium tuberculosis complex</taxon>
    </lineage>
</organism>
<comment type="similarity">
    <text evidence="1">Belongs to the methyltransferase superfamily.</text>
</comment>
<dbReference type="EC" id="2.1.1.-"/>
<dbReference type="EMBL" id="AE000516">
    <property type="protein sequence ID" value="AAK47789.1"/>
    <property type="molecule type" value="Genomic_DNA"/>
</dbReference>
<dbReference type="PIR" id="E70846">
    <property type="entry name" value="E70846"/>
</dbReference>
<dbReference type="RefSeq" id="WP_003417461.1">
    <property type="nucleotide sequence ID" value="NZ_KK341227.1"/>
</dbReference>
<dbReference type="SMR" id="P9WK00"/>
<dbReference type="KEGG" id="mtc:MT3445"/>
<dbReference type="PATRIC" id="fig|83331.31.peg.3706"/>
<dbReference type="HOGENOM" id="CLU_049344_3_0_11"/>
<dbReference type="Proteomes" id="UP000001020">
    <property type="component" value="Chromosome"/>
</dbReference>
<dbReference type="GO" id="GO:0008757">
    <property type="term" value="F:S-adenosylmethionine-dependent methyltransferase activity"/>
    <property type="evidence" value="ECO:0007669"/>
    <property type="project" value="InterPro"/>
</dbReference>
<dbReference type="GO" id="GO:0032259">
    <property type="term" value="P:methylation"/>
    <property type="evidence" value="ECO:0007669"/>
    <property type="project" value="UniProtKB-KW"/>
</dbReference>
<dbReference type="CDD" id="cd02440">
    <property type="entry name" value="AdoMet_MTases"/>
    <property type="match status" value="1"/>
</dbReference>
<dbReference type="Gene3D" id="3.40.50.150">
    <property type="entry name" value="Vaccinia Virus protein VP39"/>
    <property type="match status" value="1"/>
</dbReference>
<dbReference type="InterPro" id="IPR051052">
    <property type="entry name" value="Diverse_substrate_MTase"/>
</dbReference>
<dbReference type="InterPro" id="IPR013216">
    <property type="entry name" value="Methyltransf_11"/>
</dbReference>
<dbReference type="InterPro" id="IPR029063">
    <property type="entry name" value="SAM-dependent_MTases_sf"/>
</dbReference>
<dbReference type="PANTHER" id="PTHR44942">
    <property type="entry name" value="METHYLTRANSF_11 DOMAIN-CONTAINING PROTEIN"/>
    <property type="match status" value="1"/>
</dbReference>
<dbReference type="PANTHER" id="PTHR44942:SF4">
    <property type="entry name" value="METHYLTRANSFERASE TYPE 11 DOMAIN-CONTAINING PROTEIN"/>
    <property type="match status" value="1"/>
</dbReference>
<dbReference type="Pfam" id="PF08241">
    <property type="entry name" value="Methyltransf_11"/>
    <property type="match status" value="1"/>
</dbReference>
<dbReference type="SUPFAM" id="SSF53335">
    <property type="entry name" value="S-adenosyl-L-methionine-dependent methyltransferases"/>
    <property type="match status" value="1"/>
</dbReference>
<feature type="chain" id="PRO_0000427741" description="Uncharacterized methyltransferase MT3445">
    <location>
        <begin position="1"/>
        <end position="243"/>
    </location>
</feature>
<accession>P9WK00</accession>
<accession>L0TC93</accession>
<accession>O53392</accession>
<accession>P65348</accession>
<gene>
    <name type="ordered locus">MT3445</name>
</gene>